<keyword id="KW-0002">3D-structure</keyword>
<keyword id="KW-0007">Acetylation</keyword>
<keyword id="KW-0963">Cytoplasm</keyword>
<keyword id="KW-0488">Methylation</keyword>
<keyword id="KW-0597">Phosphoprotein</keyword>
<keyword id="KW-0648">Protein biosynthesis</keyword>
<keyword id="KW-1185">Reference proteome</keyword>
<keyword id="KW-0694">RNA-binding</keyword>
<gene>
    <name type="primary">Larp4</name>
</gene>
<sequence>MLLFVEVTSKGTGLNPNAKVWQEIPSGNPDGTPVTEPSWHETAATSGSHPEGHTELSEDMCKEYEVMYSPSCETTRNTADVEESADGMILGPEDLSYQLYDVSGESSSAISTEDLKECLKKQLEFCFSRENLSKDLYLISQMDSDQFVPIWTVANMEEIKKLTTNTDLILEVLRSSPMVQVDEKGEKVRPSHKRCIVILREIPETTPVEEVKALFKNENCPKVISCEFAHNSNWYITFQSDTDAQQAFKYLREEVKTFQGKPIMARIKAINTFFAKNGYRLMDSSMYTQPIQTPTQYPSPVFMQPVYNPQQYSVYSLVPQSWSPSPAPYFETPLAPFPNGSFVDGFSSPGSYKTNAAAMNMGRPFPKNRVKPHFRSSSGSEHSTEGSVSLGDGPLSRSSSRIFLSERHNPTVTGQQEQTYLPKEAPILQMEQNGDFGRGRRTLFRGRRRRDDDRIPRPQPAATEAKAPTPKFDLLATNFPPLPGSSSRVPDELGLENRMSDVVKGVCREKDSEDVRVSCPVPAEDGQTDCTSAPLSISPSPPCTAEPPVLSTTQQEQDQMEDSAVPKDTLNPVAVPVSSPTATKPSPANTASPCTSNINPPRAVALQEPRKLSYAEVCQKPPKEPSPVLVQPLRELRSNAVSPTRNEENGAPEKPVEKPHEKPETRASKDHSGFRGNTIPRGAAGKIREQRRQFSHRATPQGVTRRNGKEQYVPPRSPK</sequence>
<organism>
    <name type="scientific">Mus musculus</name>
    <name type="common">Mouse</name>
    <dbReference type="NCBI Taxonomy" id="10090"/>
    <lineage>
        <taxon>Eukaryota</taxon>
        <taxon>Metazoa</taxon>
        <taxon>Chordata</taxon>
        <taxon>Craniata</taxon>
        <taxon>Vertebrata</taxon>
        <taxon>Euteleostomi</taxon>
        <taxon>Mammalia</taxon>
        <taxon>Eutheria</taxon>
        <taxon>Euarchontoglires</taxon>
        <taxon>Glires</taxon>
        <taxon>Rodentia</taxon>
        <taxon>Myomorpha</taxon>
        <taxon>Muroidea</taxon>
        <taxon>Muridae</taxon>
        <taxon>Murinae</taxon>
        <taxon>Mus</taxon>
        <taxon>Mus</taxon>
    </lineage>
</organism>
<reference key="1">
    <citation type="journal article" date="2005" name="Science">
        <title>The transcriptional landscape of the mammalian genome.</title>
        <authorList>
            <person name="Carninci P."/>
            <person name="Kasukawa T."/>
            <person name="Katayama S."/>
            <person name="Gough J."/>
            <person name="Frith M.C."/>
            <person name="Maeda N."/>
            <person name="Oyama R."/>
            <person name="Ravasi T."/>
            <person name="Lenhard B."/>
            <person name="Wells C."/>
            <person name="Kodzius R."/>
            <person name="Shimokawa K."/>
            <person name="Bajic V.B."/>
            <person name="Brenner S.E."/>
            <person name="Batalov S."/>
            <person name="Forrest A.R."/>
            <person name="Zavolan M."/>
            <person name="Davis M.J."/>
            <person name="Wilming L.G."/>
            <person name="Aidinis V."/>
            <person name="Allen J.E."/>
            <person name="Ambesi-Impiombato A."/>
            <person name="Apweiler R."/>
            <person name="Aturaliya R.N."/>
            <person name="Bailey T.L."/>
            <person name="Bansal M."/>
            <person name="Baxter L."/>
            <person name="Beisel K.W."/>
            <person name="Bersano T."/>
            <person name="Bono H."/>
            <person name="Chalk A.M."/>
            <person name="Chiu K.P."/>
            <person name="Choudhary V."/>
            <person name="Christoffels A."/>
            <person name="Clutterbuck D.R."/>
            <person name="Crowe M.L."/>
            <person name="Dalla E."/>
            <person name="Dalrymple B.P."/>
            <person name="de Bono B."/>
            <person name="Della Gatta G."/>
            <person name="di Bernardo D."/>
            <person name="Down T."/>
            <person name="Engstrom P."/>
            <person name="Fagiolini M."/>
            <person name="Faulkner G."/>
            <person name="Fletcher C.F."/>
            <person name="Fukushima T."/>
            <person name="Furuno M."/>
            <person name="Futaki S."/>
            <person name="Gariboldi M."/>
            <person name="Georgii-Hemming P."/>
            <person name="Gingeras T.R."/>
            <person name="Gojobori T."/>
            <person name="Green R.E."/>
            <person name="Gustincich S."/>
            <person name="Harbers M."/>
            <person name="Hayashi Y."/>
            <person name="Hensch T.K."/>
            <person name="Hirokawa N."/>
            <person name="Hill D."/>
            <person name="Huminiecki L."/>
            <person name="Iacono M."/>
            <person name="Ikeo K."/>
            <person name="Iwama A."/>
            <person name="Ishikawa T."/>
            <person name="Jakt M."/>
            <person name="Kanapin A."/>
            <person name="Katoh M."/>
            <person name="Kawasawa Y."/>
            <person name="Kelso J."/>
            <person name="Kitamura H."/>
            <person name="Kitano H."/>
            <person name="Kollias G."/>
            <person name="Krishnan S.P."/>
            <person name="Kruger A."/>
            <person name="Kummerfeld S.K."/>
            <person name="Kurochkin I.V."/>
            <person name="Lareau L.F."/>
            <person name="Lazarevic D."/>
            <person name="Lipovich L."/>
            <person name="Liu J."/>
            <person name="Liuni S."/>
            <person name="McWilliam S."/>
            <person name="Madan Babu M."/>
            <person name="Madera M."/>
            <person name="Marchionni L."/>
            <person name="Matsuda H."/>
            <person name="Matsuzawa S."/>
            <person name="Miki H."/>
            <person name="Mignone F."/>
            <person name="Miyake S."/>
            <person name="Morris K."/>
            <person name="Mottagui-Tabar S."/>
            <person name="Mulder N."/>
            <person name="Nakano N."/>
            <person name="Nakauchi H."/>
            <person name="Ng P."/>
            <person name="Nilsson R."/>
            <person name="Nishiguchi S."/>
            <person name="Nishikawa S."/>
            <person name="Nori F."/>
            <person name="Ohara O."/>
            <person name="Okazaki Y."/>
            <person name="Orlando V."/>
            <person name="Pang K.C."/>
            <person name="Pavan W.J."/>
            <person name="Pavesi G."/>
            <person name="Pesole G."/>
            <person name="Petrovsky N."/>
            <person name="Piazza S."/>
            <person name="Reed J."/>
            <person name="Reid J.F."/>
            <person name="Ring B.Z."/>
            <person name="Ringwald M."/>
            <person name="Rost B."/>
            <person name="Ruan Y."/>
            <person name="Salzberg S.L."/>
            <person name="Sandelin A."/>
            <person name="Schneider C."/>
            <person name="Schoenbach C."/>
            <person name="Sekiguchi K."/>
            <person name="Semple C.A."/>
            <person name="Seno S."/>
            <person name="Sessa L."/>
            <person name="Sheng Y."/>
            <person name="Shibata Y."/>
            <person name="Shimada H."/>
            <person name="Shimada K."/>
            <person name="Silva D."/>
            <person name="Sinclair B."/>
            <person name="Sperling S."/>
            <person name="Stupka E."/>
            <person name="Sugiura K."/>
            <person name="Sultana R."/>
            <person name="Takenaka Y."/>
            <person name="Taki K."/>
            <person name="Tammoja K."/>
            <person name="Tan S.L."/>
            <person name="Tang S."/>
            <person name="Taylor M.S."/>
            <person name="Tegner J."/>
            <person name="Teichmann S.A."/>
            <person name="Ueda H.R."/>
            <person name="van Nimwegen E."/>
            <person name="Verardo R."/>
            <person name="Wei C.L."/>
            <person name="Yagi K."/>
            <person name="Yamanishi H."/>
            <person name="Zabarovsky E."/>
            <person name="Zhu S."/>
            <person name="Zimmer A."/>
            <person name="Hide W."/>
            <person name="Bult C."/>
            <person name="Grimmond S.M."/>
            <person name="Teasdale R.D."/>
            <person name="Liu E.T."/>
            <person name="Brusic V."/>
            <person name="Quackenbush J."/>
            <person name="Wahlestedt C."/>
            <person name="Mattick J.S."/>
            <person name="Hume D.A."/>
            <person name="Kai C."/>
            <person name="Sasaki D."/>
            <person name="Tomaru Y."/>
            <person name="Fukuda S."/>
            <person name="Kanamori-Katayama M."/>
            <person name="Suzuki M."/>
            <person name="Aoki J."/>
            <person name="Arakawa T."/>
            <person name="Iida J."/>
            <person name="Imamura K."/>
            <person name="Itoh M."/>
            <person name="Kato T."/>
            <person name="Kawaji H."/>
            <person name="Kawagashira N."/>
            <person name="Kawashima T."/>
            <person name="Kojima M."/>
            <person name="Kondo S."/>
            <person name="Konno H."/>
            <person name="Nakano K."/>
            <person name="Ninomiya N."/>
            <person name="Nishio T."/>
            <person name="Okada M."/>
            <person name="Plessy C."/>
            <person name="Shibata K."/>
            <person name="Shiraki T."/>
            <person name="Suzuki S."/>
            <person name="Tagami M."/>
            <person name="Waki K."/>
            <person name="Watahiki A."/>
            <person name="Okamura-Oho Y."/>
            <person name="Suzuki H."/>
            <person name="Kawai J."/>
            <person name="Hayashizaki Y."/>
        </authorList>
    </citation>
    <scope>NUCLEOTIDE SEQUENCE [LARGE SCALE MRNA]</scope>
    <source>
        <strain>C57BL/6J</strain>
        <tissue>Embryo</tissue>
        <tissue>Embryonic spinal cord</tissue>
    </source>
</reference>
<reference key="2">
    <citation type="journal article" date="2010" name="Cell">
        <title>A tissue-specific atlas of mouse protein phosphorylation and expression.</title>
        <authorList>
            <person name="Huttlin E.L."/>
            <person name="Jedrychowski M.P."/>
            <person name="Elias J.E."/>
            <person name="Goswami T."/>
            <person name="Rad R."/>
            <person name="Beausoleil S.A."/>
            <person name="Villen J."/>
            <person name="Haas W."/>
            <person name="Sowa M.E."/>
            <person name="Gygi S.P."/>
        </authorList>
    </citation>
    <scope>PHOSPHORYLATION [LARGE SCALE ANALYSIS] AT SER-396</scope>
    <scope>IDENTIFICATION BY MASS SPECTROMETRY [LARGE SCALE ANALYSIS]</scope>
    <source>
        <tissue>Brain</tissue>
        <tissue>Brown adipose tissue</tissue>
        <tissue>Heart</tissue>
        <tissue>Kidney</tissue>
        <tissue>Liver</tissue>
        <tissue>Lung</tissue>
        <tissue>Pancreas</tissue>
        <tissue>Spleen</tissue>
    </source>
</reference>
<accession>Q8BWW4</accession>
<accession>Q3UR69</accession>
<proteinExistence type="evidence at protein level"/>
<comment type="function">
    <text evidence="1">RNA binding protein that binds to the poly-A tract of mRNA molecules. Associates with the 40S ribosomal subunit and with polysomes. Plays a role in the regulation of mRNA translation. Plays a role in the regulation of cell morphology and cytoskeletal organization.</text>
</comment>
<comment type="subunit">
    <text evidence="1">Interacts (via N-terminal region) with PABPC1. Interacts with RACK1.</text>
</comment>
<comment type="subcellular location">
    <subcellularLocation>
        <location evidence="1">Cytoplasm</location>
        <location evidence="1">Stress granule</location>
    </subcellularLocation>
    <subcellularLocation>
        <location evidence="1">Cytoplasm</location>
        <location evidence="1">Cytosol</location>
    </subcellularLocation>
    <text evidence="1">Localized throughout the cytosol. Partially localized in stress granules in response to arsenite treatment.</text>
</comment>
<feature type="chain" id="PRO_0000207612" description="La-related protein 4">
    <location>
        <begin position="1"/>
        <end position="719"/>
    </location>
</feature>
<feature type="domain" description="HTH La-type RNA-binding" evidence="2">
    <location>
        <begin position="109"/>
        <end position="198"/>
    </location>
</feature>
<feature type="domain" description="RRM">
    <location>
        <begin position="199"/>
        <end position="277"/>
    </location>
</feature>
<feature type="region of interest" description="Interaction with PABPC1" evidence="1">
    <location>
        <begin position="12"/>
        <end position="21"/>
    </location>
</feature>
<feature type="region of interest" description="Disordered" evidence="3">
    <location>
        <begin position="21"/>
        <end position="55"/>
    </location>
</feature>
<feature type="region of interest" description="Interaction with the poly-A tract of mRNA" evidence="1">
    <location>
        <begin position="107"/>
        <end position="299"/>
    </location>
</feature>
<feature type="region of interest" description="Disordered" evidence="3">
    <location>
        <begin position="363"/>
        <end position="398"/>
    </location>
</feature>
<feature type="region of interest" description="Disordered" evidence="3">
    <location>
        <begin position="437"/>
        <end position="470"/>
    </location>
</feature>
<feature type="region of interest" description="Disordered" evidence="3">
    <location>
        <begin position="529"/>
        <end position="562"/>
    </location>
</feature>
<feature type="region of interest" description="Disordered" evidence="3">
    <location>
        <begin position="576"/>
        <end position="601"/>
    </location>
</feature>
<feature type="region of interest" description="Disordered" evidence="3">
    <location>
        <begin position="615"/>
        <end position="719"/>
    </location>
</feature>
<feature type="compositionally biased region" description="Low complexity" evidence="3">
    <location>
        <begin position="376"/>
        <end position="389"/>
    </location>
</feature>
<feature type="compositionally biased region" description="Basic residues" evidence="3">
    <location>
        <begin position="439"/>
        <end position="448"/>
    </location>
</feature>
<feature type="compositionally biased region" description="Low complexity" evidence="3">
    <location>
        <begin position="460"/>
        <end position="470"/>
    </location>
</feature>
<feature type="compositionally biased region" description="Polar residues" evidence="3">
    <location>
        <begin position="529"/>
        <end position="538"/>
    </location>
</feature>
<feature type="compositionally biased region" description="Polar residues" evidence="3">
    <location>
        <begin position="578"/>
        <end position="599"/>
    </location>
</feature>
<feature type="compositionally biased region" description="Basic and acidic residues" evidence="3">
    <location>
        <begin position="654"/>
        <end position="673"/>
    </location>
</feature>
<feature type="modified residue" description="N-acetylmethionine" evidence="1">
    <location>
        <position position="1"/>
    </location>
</feature>
<feature type="modified residue" description="Omega-N-methylarginine" evidence="1">
    <location>
        <position position="363"/>
    </location>
</feature>
<feature type="modified residue" description="Phosphoserine" evidence="1">
    <location>
        <position position="387"/>
    </location>
</feature>
<feature type="modified residue" description="Phosphoserine" evidence="4">
    <location>
        <position position="396"/>
    </location>
</feature>
<feature type="modified residue" description="Phosphoserine" evidence="1">
    <location>
        <position position="500"/>
    </location>
</feature>
<feature type="modified residue" description="Phosphoserine" evidence="1">
    <location>
        <position position="578"/>
    </location>
</feature>
<feature type="modified residue" description="Phosphoserine" evidence="1">
    <location>
        <position position="592"/>
    </location>
</feature>
<feature type="modified residue" description="Phosphoserine" evidence="1">
    <location>
        <position position="642"/>
    </location>
</feature>
<feature type="modified residue" description="Phosphothreonine" evidence="1">
    <location>
        <position position="644"/>
    </location>
</feature>
<feature type="modified residue" description="Omega-N-methylarginine" evidence="1">
    <location>
        <position position="681"/>
    </location>
</feature>
<feature type="modified residue" description="Phosphoserine" evidence="1">
    <location>
        <position position="717"/>
    </location>
</feature>
<dbReference type="EMBL" id="AK049756">
    <property type="protein sequence ID" value="BAC33905.2"/>
    <property type="molecule type" value="mRNA"/>
</dbReference>
<dbReference type="EMBL" id="AK141743">
    <property type="protein sequence ID" value="BAE24819.1"/>
    <property type="molecule type" value="mRNA"/>
</dbReference>
<dbReference type="CCDS" id="CCDS37208.1"/>
<dbReference type="RefSeq" id="NP_001019697.2">
    <property type="nucleotide sequence ID" value="NM_001024526.2"/>
</dbReference>
<dbReference type="RefSeq" id="NP_001074417.1">
    <property type="nucleotide sequence ID" value="NM_001080948.2"/>
</dbReference>
<dbReference type="RefSeq" id="NP_001271450.1">
    <property type="nucleotide sequence ID" value="NM_001284521.1"/>
</dbReference>
<dbReference type="RefSeq" id="NP_001271451.1">
    <property type="nucleotide sequence ID" value="NM_001284522.1"/>
</dbReference>
<dbReference type="RefSeq" id="NP_001271452.1">
    <property type="nucleotide sequence ID" value="NM_001284523.1"/>
</dbReference>
<dbReference type="PDB" id="9LXG">
    <property type="method" value="X-ray"/>
    <property type="resolution" value="2.46 A"/>
    <property type="chains" value="B=265-277"/>
</dbReference>
<dbReference type="PDBsum" id="9LXG"/>
<dbReference type="SMR" id="Q8BWW4"/>
<dbReference type="BioGRID" id="228885">
    <property type="interactions" value="6"/>
</dbReference>
<dbReference type="FunCoup" id="Q8BWW4">
    <property type="interactions" value="350"/>
</dbReference>
<dbReference type="IntAct" id="Q8BWW4">
    <property type="interactions" value="1"/>
</dbReference>
<dbReference type="MINT" id="Q8BWW4"/>
<dbReference type="STRING" id="10090.ENSMUSP00000097780"/>
<dbReference type="GlyGen" id="Q8BWW4">
    <property type="glycosylation" value="4 sites, 1 O-linked glycan (4 sites)"/>
</dbReference>
<dbReference type="iPTMnet" id="Q8BWW4"/>
<dbReference type="PhosphoSitePlus" id="Q8BWW4"/>
<dbReference type="SwissPalm" id="Q8BWW4"/>
<dbReference type="jPOST" id="Q8BWW4"/>
<dbReference type="PaxDb" id="10090-ENSMUSP00000097780"/>
<dbReference type="ProteomicsDB" id="265042"/>
<dbReference type="Pumba" id="Q8BWW4"/>
<dbReference type="GeneID" id="207214"/>
<dbReference type="KEGG" id="mmu:207214"/>
<dbReference type="AGR" id="MGI:2443114"/>
<dbReference type="CTD" id="113251"/>
<dbReference type="MGI" id="MGI:2443114">
    <property type="gene designation" value="Larp4"/>
</dbReference>
<dbReference type="eggNOG" id="KOG2590">
    <property type="taxonomic scope" value="Eukaryota"/>
</dbReference>
<dbReference type="eggNOG" id="KOG2591">
    <property type="taxonomic scope" value="Eukaryota"/>
</dbReference>
<dbReference type="InParanoid" id="Q8BWW4"/>
<dbReference type="OrthoDB" id="10046764at2759"/>
<dbReference type="PhylomeDB" id="Q8BWW4"/>
<dbReference type="BioGRID-ORCS" id="207214">
    <property type="hits" value="19 hits in 77 CRISPR screens"/>
</dbReference>
<dbReference type="ChiTaRS" id="Larp4">
    <property type="organism name" value="mouse"/>
</dbReference>
<dbReference type="PRO" id="PR:Q8BWW4"/>
<dbReference type="Proteomes" id="UP000000589">
    <property type="component" value="Unplaced"/>
</dbReference>
<dbReference type="RNAct" id="Q8BWW4">
    <property type="molecule type" value="protein"/>
</dbReference>
<dbReference type="GO" id="GO:0010494">
    <property type="term" value="C:cytoplasmic stress granule"/>
    <property type="evidence" value="ECO:0007669"/>
    <property type="project" value="UniProtKB-SubCell"/>
</dbReference>
<dbReference type="GO" id="GO:0005829">
    <property type="term" value="C:cytosol"/>
    <property type="evidence" value="ECO:0007669"/>
    <property type="project" value="UniProtKB-SubCell"/>
</dbReference>
<dbReference type="GO" id="GO:0003723">
    <property type="term" value="F:RNA binding"/>
    <property type="evidence" value="ECO:0007669"/>
    <property type="project" value="UniProtKB-KW"/>
</dbReference>
<dbReference type="GO" id="GO:0007010">
    <property type="term" value="P:cytoskeleton organization"/>
    <property type="evidence" value="ECO:0000250"/>
    <property type="project" value="UniProtKB"/>
</dbReference>
<dbReference type="GO" id="GO:0022604">
    <property type="term" value="P:regulation of cell morphogenesis"/>
    <property type="evidence" value="ECO:0000250"/>
    <property type="project" value="UniProtKB"/>
</dbReference>
<dbReference type="GO" id="GO:0006412">
    <property type="term" value="P:translation"/>
    <property type="evidence" value="ECO:0007669"/>
    <property type="project" value="UniProtKB-KW"/>
</dbReference>
<dbReference type="CDD" id="cd08035">
    <property type="entry name" value="LARP_4"/>
    <property type="match status" value="1"/>
</dbReference>
<dbReference type="CDD" id="cd12707">
    <property type="entry name" value="RRM_LARP4"/>
    <property type="match status" value="1"/>
</dbReference>
<dbReference type="FunFam" id="1.10.10.10:FF:000144">
    <property type="entry name" value="la-related protein 4 isoform X2"/>
    <property type="match status" value="1"/>
</dbReference>
<dbReference type="Gene3D" id="1.10.10.10">
    <property type="entry name" value="Winged helix-like DNA-binding domain superfamily/Winged helix DNA-binding domain"/>
    <property type="match status" value="1"/>
</dbReference>
<dbReference type="InterPro" id="IPR045180">
    <property type="entry name" value="La_dom_prot"/>
</dbReference>
<dbReference type="InterPro" id="IPR006630">
    <property type="entry name" value="La_HTH"/>
</dbReference>
<dbReference type="InterPro" id="IPR034903">
    <property type="entry name" value="LARP4_RRM"/>
</dbReference>
<dbReference type="InterPro" id="IPR035979">
    <property type="entry name" value="RBD_domain_sf"/>
</dbReference>
<dbReference type="InterPro" id="IPR036388">
    <property type="entry name" value="WH-like_DNA-bd_sf"/>
</dbReference>
<dbReference type="InterPro" id="IPR036390">
    <property type="entry name" value="WH_DNA-bd_sf"/>
</dbReference>
<dbReference type="PANTHER" id="PTHR22792:SF48">
    <property type="entry name" value="LA-RELATED PROTEIN 4"/>
    <property type="match status" value="1"/>
</dbReference>
<dbReference type="PANTHER" id="PTHR22792">
    <property type="entry name" value="LUPUS LA PROTEIN-RELATED"/>
    <property type="match status" value="1"/>
</dbReference>
<dbReference type="Pfam" id="PF05383">
    <property type="entry name" value="La"/>
    <property type="match status" value="1"/>
</dbReference>
<dbReference type="SMART" id="SM00715">
    <property type="entry name" value="LA"/>
    <property type="match status" value="1"/>
</dbReference>
<dbReference type="SUPFAM" id="SSF54928">
    <property type="entry name" value="RNA-binding domain, RBD"/>
    <property type="match status" value="1"/>
</dbReference>
<dbReference type="SUPFAM" id="SSF46785">
    <property type="entry name" value="Winged helix' DNA-binding domain"/>
    <property type="match status" value="1"/>
</dbReference>
<dbReference type="PROSITE" id="PS50961">
    <property type="entry name" value="HTH_LA"/>
    <property type="match status" value="1"/>
</dbReference>
<evidence type="ECO:0000250" key="1">
    <source>
        <dbReference type="UniProtKB" id="Q71RC2"/>
    </source>
</evidence>
<evidence type="ECO:0000255" key="2">
    <source>
        <dbReference type="PROSITE-ProRule" id="PRU00332"/>
    </source>
</evidence>
<evidence type="ECO:0000256" key="3">
    <source>
        <dbReference type="SAM" id="MobiDB-lite"/>
    </source>
</evidence>
<evidence type="ECO:0007744" key="4">
    <source>
    </source>
</evidence>
<protein>
    <recommendedName>
        <fullName>La-related protein 4</fullName>
    </recommendedName>
    <alternativeName>
        <fullName>La ribonucleoprotein domain family member 4</fullName>
    </alternativeName>
</protein>
<name>LARP4_MOUSE</name>